<sequence length="107" mass="11857">MMKVLVVVALLVTLISYSSSEGIDDLEADELLSLMANEHPRKECIPKHHECTSNKHGCCRGNFFKYKCQCTTVVAQDGEQTERCFCGTPPHHKAAELVVGFGKKIFG</sequence>
<comment type="subcellular location">
    <subcellularLocation>
        <location evidence="1">Secreted</location>
    </subcellularLocation>
</comment>
<comment type="tissue specificity">
    <text>Expressed by the venom gland.</text>
</comment>
<comment type="domain">
    <text evidence="1">The presence of a 'disulfide through disulfide knot' structurally defines this protein as a knottin.</text>
</comment>
<comment type="similarity">
    <text evidence="3">Belongs to the neurotoxin 19 (CSTX) family. 04 (U1-Lctx) subfamily.</text>
</comment>
<evidence type="ECO:0000250" key="1"/>
<evidence type="ECO:0000255" key="2"/>
<evidence type="ECO:0000305" key="3"/>
<feature type="signal peptide" evidence="2">
    <location>
        <begin position="1"/>
        <end position="20"/>
    </location>
</feature>
<feature type="propeptide" id="PRO_0000401575" evidence="1">
    <location>
        <begin position="21"/>
        <end position="41"/>
    </location>
</feature>
<feature type="chain" id="PRO_0000401576" description="U1-lycotoxin-Ls1x">
    <location>
        <begin position="42"/>
        <end position="107"/>
    </location>
</feature>
<feature type="disulfide bond" evidence="1">
    <location>
        <begin position="44"/>
        <end position="59"/>
    </location>
</feature>
<feature type="disulfide bond" evidence="1">
    <location>
        <begin position="51"/>
        <end position="68"/>
    </location>
</feature>
<feature type="disulfide bond" evidence="1">
    <location>
        <begin position="58"/>
        <end position="86"/>
    </location>
</feature>
<feature type="disulfide bond" evidence="1">
    <location>
        <begin position="70"/>
        <end position="84"/>
    </location>
</feature>
<protein>
    <recommendedName>
        <fullName>U1-lycotoxin-Ls1x</fullName>
    </recommendedName>
    <alternativeName>
        <fullName>Toxin-like structure LSTX-A40</fullName>
    </alternativeName>
</protein>
<name>TX140_LYCSI</name>
<reference key="1">
    <citation type="journal article" date="2010" name="Zoology">
        <title>Transcriptome analysis of the venom glands of the Chinese wolf spider Lycosa singoriensis.</title>
        <authorList>
            <person name="Zhang Y."/>
            <person name="Chen J."/>
            <person name="Tang X."/>
            <person name="Wang F."/>
            <person name="Jiang L."/>
            <person name="Xiong X."/>
            <person name="Wang M."/>
            <person name="Rong M."/>
            <person name="Liu Z."/>
            <person name="Liang S."/>
        </authorList>
    </citation>
    <scope>NUCLEOTIDE SEQUENCE [LARGE SCALE MRNA]</scope>
    <source>
        <tissue>Venom gland</tissue>
    </source>
</reference>
<keyword id="KW-1015">Disulfide bond</keyword>
<keyword id="KW-0960">Knottin</keyword>
<keyword id="KW-0964">Secreted</keyword>
<keyword id="KW-0732">Signal</keyword>
<keyword id="KW-0800">Toxin</keyword>
<dbReference type="EMBL" id="EU925963">
    <property type="protein sequence ID" value="ACI41295.1"/>
    <property type="molecule type" value="mRNA"/>
</dbReference>
<dbReference type="EMBL" id="FM863967">
    <property type="protein sequence ID" value="CAS03565.1"/>
    <property type="molecule type" value="mRNA"/>
</dbReference>
<dbReference type="SMR" id="B6DCM9"/>
<dbReference type="ArachnoServer" id="AS000912">
    <property type="toxin name" value="U1-lycotoxin-Ls1x"/>
</dbReference>
<dbReference type="GO" id="GO:0005576">
    <property type="term" value="C:extracellular region"/>
    <property type="evidence" value="ECO:0007669"/>
    <property type="project" value="UniProtKB-SubCell"/>
</dbReference>
<dbReference type="GO" id="GO:0090729">
    <property type="term" value="F:toxin activity"/>
    <property type="evidence" value="ECO:0007669"/>
    <property type="project" value="UniProtKB-KW"/>
</dbReference>
<dbReference type="InterPro" id="IPR019553">
    <property type="entry name" value="Spider_toxin_CSTX_knottin"/>
</dbReference>
<dbReference type="InterPro" id="IPR011142">
    <property type="entry name" value="Spider_toxin_CSTX_Knottin_CS"/>
</dbReference>
<dbReference type="Pfam" id="PF10530">
    <property type="entry name" value="Toxin_35"/>
    <property type="match status" value="1"/>
</dbReference>
<dbReference type="PROSITE" id="PS60029">
    <property type="entry name" value="SPIDER_CSTX"/>
    <property type="match status" value="1"/>
</dbReference>
<organism>
    <name type="scientific">Lycosa singoriensis</name>
    <name type="common">Wolf spider</name>
    <name type="synonym">Aranea singoriensis</name>
    <dbReference type="NCBI Taxonomy" id="434756"/>
    <lineage>
        <taxon>Eukaryota</taxon>
        <taxon>Metazoa</taxon>
        <taxon>Ecdysozoa</taxon>
        <taxon>Arthropoda</taxon>
        <taxon>Chelicerata</taxon>
        <taxon>Arachnida</taxon>
        <taxon>Araneae</taxon>
        <taxon>Araneomorphae</taxon>
        <taxon>Entelegynae</taxon>
        <taxon>Lycosoidea</taxon>
        <taxon>Lycosidae</taxon>
        <taxon>Lycosa</taxon>
    </lineage>
</organism>
<accession>B6DCM9</accession>
<proteinExistence type="evidence at transcript level"/>